<protein>
    <recommendedName>
        <fullName evidence="1">Cysteine--tRNA ligase</fullName>
        <ecNumber evidence="1">6.1.1.16</ecNumber>
    </recommendedName>
    <alternativeName>
        <fullName evidence="1">Cysteinyl-tRNA synthetase</fullName>
        <shortName evidence="1">CysRS</shortName>
    </alternativeName>
</protein>
<accession>B6JHT8</accession>
<accession>F8BZ60</accession>
<sequence length="464" mass="51676">MDLKLYDTLTKDKRAFVPLDPRNVRMYVCGPTVYDFAHIGNARPVIVFDVLFRLLRHIYGDSHVTYVRNITDVDDKINDRALRDYPGLPLNEAIRKVTEKTATQFRADVDALGCLQPTVEPRATDFVLPRPDGKTDMVSLIKTLIDRGHAYEANGEVLFDTASMPDYGQLSGRKLEEQQAGARIAVDAHKKHAADFVLWKQSSADEPGWDSPWGRGRPGWHIECSAMSAAYLGETFDIHGGGLDLIFPHHENEIAQSRCAHGTHAMANYWLHNGFLQVEGEKMSKSLGNFVTINELLQDWPGEVVRLNMLKTHYRSPIDWTLKGLEESAKALDDWYATAGDAAGSAPADTVMETLCDDLNTAQTVAALHGLRHQAEKGDAAQRDQLAASLRFLGFFSETKDAWDARKREASGVDAAQVTALIADRTAARARKDWKESDRIRDELAAMGVAIKDSKEGTTWEIAR</sequence>
<feature type="chain" id="PRO_1000090854" description="Cysteine--tRNA ligase">
    <location>
        <begin position="1"/>
        <end position="464"/>
    </location>
</feature>
<feature type="short sequence motif" description="'HIGH' region">
    <location>
        <begin position="31"/>
        <end position="41"/>
    </location>
</feature>
<feature type="short sequence motif" description="'KMSKS' region">
    <location>
        <begin position="282"/>
        <end position="286"/>
    </location>
</feature>
<feature type="binding site" evidence="1">
    <location>
        <position position="29"/>
    </location>
    <ligand>
        <name>Zn(2+)</name>
        <dbReference type="ChEBI" id="CHEBI:29105"/>
    </ligand>
</feature>
<feature type="binding site" evidence="1">
    <location>
        <position position="224"/>
    </location>
    <ligand>
        <name>Zn(2+)</name>
        <dbReference type="ChEBI" id="CHEBI:29105"/>
    </ligand>
</feature>
<feature type="binding site" evidence="1">
    <location>
        <position position="249"/>
    </location>
    <ligand>
        <name>Zn(2+)</name>
        <dbReference type="ChEBI" id="CHEBI:29105"/>
    </ligand>
</feature>
<feature type="binding site" evidence="1">
    <location>
        <position position="253"/>
    </location>
    <ligand>
        <name>Zn(2+)</name>
        <dbReference type="ChEBI" id="CHEBI:29105"/>
    </ligand>
</feature>
<feature type="binding site" evidence="1">
    <location>
        <position position="285"/>
    </location>
    <ligand>
        <name>ATP</name>
        <dbReference type="ChEBI" id="CHEBI:30616"/>
    </ligand>
</feature>
<gene>
    <name evidence="1" type="primary">cysS</name>
    <name type="ordered locus">OCAR_6519</name>
    <name type="ordered locus">OCA5_c15400</name>
</gene>
<reference key="1">
    <citation type="journal article" date="2008" name="J. Bacteriol.">
        <title>Genome sequence of the chemolithoautotrophic bacterium Oligotropha carboxidovorans OM5T.</title>
        <authorList>
            <person name="Paul D."/>
            <person name="Bridges S."/>
            <person name="Burgess S.C."/>
            <person name="Dandass Y."/>
            <person name="Lawrence M.L."/>
        </authorList>
    </citation>
    <scope>NUCLEOTIDE SEQUENCE [LARGE SCALE GENOMIC DNA]</scope>
    <source>
        <strain>ATCC 49405 / DSM 1227 / KCTC 32145 / OM5</strain>
    </source>
</reference>
<reference key="2">
    <citation type="journal article" date="2011" name="J. Bacteriol.">
        <title>Complete genome sequences of the chemolithoautotrophic Oligotropha carboxidovorans strains OM4 and OM5.</title>
        <authorList>
            <person name="Volland S."/>
            <person name="Rachinger M."/>
            <person name="Strittmatter A."/>
            <person name="Daniel R."/>
            <person name="Gottschalk G."/>
            <person name="Meyer O."/>
        </authorList>
    </citation>
    <scope>NUCLEOTIDE SEQUENCE [LARGE SCALE GENOMIC DNA]</scope>
    <source>
        <strain>ATCC 49405 / DSM 1227 / KCTC 32145 / OM5</strain>
    </source>
</reference>
<organism>
    <name type="scientific">Afipia carboxidovorans (strain ATCC 49405 / DSM 1227 / KCTC 32145 / OM5)</name>
    <name type="common">Oligotropha carboxidovorans</name>
    <dbReference type="NCBI Taxonomy" id="504832"/>
    <lineage>
        <taxon>Bacteria</taxon>
        <taxon>Pseudomonadati</taxon>
        <taxon>Pseudomonadota</taxon>
        <taxon>Alphaproteobacteria</taxon>
        <taxon>Hyphomicrobiales</taxon>
        <taxon>Nitrobacteraceae</taxon>
        <taxon>Afipia</taxon>
    </lineage>
</organism>
<keyword id="KW-0030">Aminoacyl-tRNA synthetase</keyword>
<keyword id="KW-0067">ATP-binding</keyword>
<keyword id="KW-0963">Cytoplasm</keyword>
<keyword id="KW-0436">Ligase</keyword>
<keyword id="KW-0479">Metal-binding</keyword>
<keyword id="KW-0547">Nucleotide-binding</keyword>
<keyword id="KW-0648">Protein biosynthesis</keyword>
<keyword id="KW-1185">Reference proteome</keyword>
<keyword id="KW-0862">Zinc</keyword>
<evidence type="ECO:0000255" key="1">
    <source>
        <dbReference type="HAMAP-Rule" id="MF_00041"/>
    </source>
</evidence>
<dbReference type="EC" id="6.1.1.16" evidence="1"/>
<dbReference type="EMBL" id="CP001196">
    <property type="protein sequence ID" value="ACI93631.1"/>
    <property type="molecule type" value="Genomic_DNA"/>
</dbReference>
<dbReference type="EMBL" id="CP002826">
    <property type="protein sequence ID" value="AEI06256.1"/>
    <property type="molecule type" value="Genomic_DNA"/>
</dbReference>
<dbReference type="RefSeq" id="WP_012563657.1">
    <property type="nucleotide sequence ID" value="NC_015684.1"/>
</dbReference>
<dbReference type="SMR" id="B6JHT8"/>
<dbReference type="STRING" id="504832.OCA5_c15400"/>
<dbReference type="KEGG" id="oca:OCAR_6519"/>
<dbReference type="KEGG" id="ocg:OCA5_c15400"/>
<dbReference type="PATRIC" id="fig|504832.7.peg.1638"/>
<dbReference type="eggNOG" id="COG0215">
    <property type="taxonomic scope" value="Bacteria"/>
</dbReference>
<dbReference type="HOGENOM" id="CLU_013528_0_1_5"/>
<dbReference type="OrthoDB" id="9815130at2"/>
<dbReference type="Proteomes" id="UP000007730">
    <property type="component" value="Chromosome"/>
</dbReference>
<dbReference type="GO" id="GO:0005829">
    <property type="term" value="C:cytosol"/>
    <property type="evidence" value="ECO:0007669"/>
    <property type="project" value="TreeGrafter"/>
</dbReference>
<dbReference type="GO" id="GO:0005524">
    <property type="term" value="F:ATP binding"/>
    <property type="evidence" value="ECO:0007669"/>
    <property type="project" value="UniProtKB-UniRule"/>
</dbReference>
<dbReference type="GO" id="GO:0004817">
    <property type="term" value="F:cysteine-tRNA ligase activity"/>
    <property type="evidence" value="ECO:0007669"/>
    <property type="project" value="UniProtKB-UniRule"/>
</dbReference>
<dbReference type="GO" id="GO:0008270">
    <property type="term" value="F:zinc ion binding"/>
    <property type="evidence" value="ECO:0007669"/>
    <property type="project" value="UniProtKB-UniRule"/>
</dbReference>
<dbReference type="GO" id="GO:0006423">
    <property type="term" value="P:cysteinyl-tRNA aminoacylation"/>
    <property type="evidence" value="ECO:0007669"/>
    <property type="project" value="UniProtKB-UniRule"/>
</dbReference>
<dbReference type="CDD" id="cd00672">
    <property type="entry name" value="CysRS_core"/>
    <property type="match status" value="1"/>
</dbReference>
<dbReference type="FunFam" id="3.40.50.620:FF:000068">
    <property type="entry name" value="Cysteine--tRNA ligase"/>
    <property type="match status" value="1"/>
</dbReference>
<dbReference type="Gene3D" id="1.20.120.1910">
    <property type="entry name" value="Cysteine-tRNA ligase, C-terminal anti-codon recognition domain"/>
    <property type="match status" value="1"/>
</dbReference>
<dbReference type="Gene3D" id="3.40.50.620">
    <property type="entry name" value="HUPs"/>
    <property type="match status" value="1"/>
</dbReference>
<dbReference type="HAMAP" id="MF_00041">
    <property type="entry name" value="Cys_tRNA_synth"/>
    <property type="match status" value="1"/>
</dbReference>
<dbReference type="InterPro" id="IPR015803">
    <property type="entry name" value="Cys-tRNA-ligase"/>
</dbReference>
<dbReference type="InterPro" id="IPR015273">
    <property type="entry name" value="Cys-tRNA-synt_Ia_DALR"/>
</dbReference>
<dbReference type="InterPro" id="IPR024909">
    <property type="entry name" value="Cys-tRNA/MSH_ligase"/>
</dbReference>
<dbReference type="InterPro" id="IPR056411">
    <property type="entry name" value="CysS_C"/>
</dbReference>
<dbReference type="InterPro" id="IPR014729">
    <property type="entry name" value="Rossmann-like_a/b/a_fold"/>
</dbReference>
<dbReference type="InterPro" id="IPR032678">
    <property type="entry name" value="tRNA-synt_1_cat_dom"/>
</dbReference>
<dbReference type="InterPro" id="IPR009080">
    <property type="entry name" value="tRNAsynth_Ia_anticodon-bd"/>
</dbReference>
<dbReference type="NCBIfam" id="TIGR00435">
    <property type="entry name" value="cysS"/>
    <property type="match status" value="1"/>
</dbReference>
<dbReference type="PANTHER" id="PTHR10890:SF3">
    <property type="entry name" value="CYSTEINE--TRNA LIGASE, CYTOPLASMIC"/>
    <property type="match status" value="1"/>
</dbReference>
<dbReference type="PANTHER" id="PTHR10890">
    <property type="entry name" value="CYSTEINYL-TRNA SYNTHETASE"/>
    <property type="match status" value="1"/>
</dbReference>
<dbReference type="Pfam" id="PF23493">
    <property type="entry name" value="CysS_C"/>
    <property type="match status" value="1"/>
</dbReference>
<dbReference type="Pfam" id="PF09190">
    <property type="entry name" value="DALR_2"/>
    <property type="match status" value="1"/>
</dbReference>
<dbReference type="Pfam" id="PF01406">
    <property type="entry name" value="tRNA-synt_1e"/>
    <property type="match status" value="1"/>
</dbReference>
<dbReference type="PRINTS" id="PR00983">
    <property type="entry name" value="TRNASYNTHCYS"/>
</dbReference>
<dbReference type="SMART" id="SM00840">
    <property type="entry name" value="DALR_2"/>
    <property type="match status" value="1"/>
</dbReference>
<dbReference type="SUPFAM" id="SSF47323">
    <property type="entry name" value="Anticodon-binding domain of a subclass of class I aminoacyl-tRNA synthetases"/>
    <property type="match status" value="1"/>
</dbReference>
<dbReference type="SUPFAM" id="SSF52374">
    <property type="entry name" value="Nucleotidylyl transferase"/>
    <property type="match status" value="1"/>
</dbReference>
<name>SYC_AFIC5</name>
<comment type="catalytic activity">
    <reaction evidence="1">
        <text>tRNA(Cys) + L-cysteine + ATP = L-cysteinyl-tRNA(Cys) + AMP + diphosphate</text>
        <dbReference type="Rhea" id="RHEA:17773"/>
        <dbReference type="Rhea" id="RHEA-COMP:9661"/>
        <dbReference type="Rhea" id="RHEA-COMP:9679"/>
        <dbReference type="ChEBI" id="CHEBI:30616"/>
        <dbReference type="ChEBI" id="CHEBI:33019"/>
        <dbReference type="ChEBI" id="CHEBI:35235"/>
        <dbReference type="ChEBI" id="CHEBI:78442"/>
        <dbReference type="ChEBI" id="CHEBI:78517"/>
        <dbReference type="ChEBI" id="CHEBI:456215"/>
        <dbReference type="EC" id="6.1.1.16"/>
    </reaction>
</comment>
<comment type="cofactor">
    <cofactor evidence="1">
        <name>Zn(2+)</name>
        <dbReference type="ChEBI" id="CHEBI:29105"/>
    </cofactor>
    <text evidence="1">Binds 1 zinc ion per subunit.</text>
</comment>
<comment type="subunit">
    <text evidence="1">Monomer.</text>
</comment>
<comment type="subcellular location">
    <subcellularLocation>
        <location evidence="1">Cytoplasm</location>
    </subcellularLocation>
</comment>
<comment type="similarity">
    <text evidence="1">Belongs to the class-I aminoacyl-tRNA synthetase family.</text>
</comment>
<proteinExistence type="inferred from homology"/>